<dbReference type="EMBL" id="X69198">
    <property type="protein sequence ID" value="CAA49060.1"/>
    <property type="molecule type" value="Genomic_DNA"/>
</dbReference>
<dbReference type="PIR" id="G36849">
    <property type="entry name" value="G36849"/>
</dbReference>
<dbReference type="RefSeq" id="NP_042163.1">
    <property type="nucleotide sequence ID" value="NC_001611.1"/>
</dbReference>
<dbReference type="GeneID" id="1486490"/>
<dbReference type="KEGG" id="vg:1486490"/>
<dbReference type="Proteomes" id="UP000002060">
    <property type="component" value="Segment"/>
</dbReference>
<dbReference type="GO" id="GO:0030430">
    <property type="term" value="C:host cell cytoplasm"/>
    <property type="evidence" value="ECO:0007669"/>
    <property type="project" value="UniProtKB-SubCell"/>
</dbReference>
<dbReference type="GO" id="GO:0044423">
    <property type="term" value="C:virion component"/>
    <property type="evidence" value="ECO:0007669"/>
    <property type="project" value="UniProtKB-KW"/>
</dbReference>
<dbReference type="GO" id="GO:0005524">
    <property type="term" value="F:ATP binding"/>
    <property type="evidence" value="ECO:0007669"/>
    <property type="project" value="UniProtKB-KW"/>
</dbReference>
<dbReference type="GO" id="GO:0003677">
    <property type="term" value="F:DNA binding"/>
    <property type="evidence" value="ECO:0007669"/>
    <property type="project" value="UniProtKB-KW"/>
</dbReference>
<dbReference type="GO" id="GO:0004386">
    <property type="term" value="F:helicase activity"/>
    <property type="evidence" value="ECO:0007669"/>
    <property type="project" value="UniProtKB-KW"/>
</dbReference>
<dbReference type="GO" id="GO:0016787">
    <property type="term" value="F:hydrolase activity"/>
    <property type="evidence" value="ECO:0007669"/>
    <property type="project" value="UniProtKB-KW"/>
</dbReference>
<dbReference type="GO" id="GO:0006353">
    <property type="term" value="P:DNA-templated transcription termination"/>
    <property type="evidence" value="ECO:0007669"/>
    <property type="project" value="UniProtKB-KW"/>
</dbReference>
<dbReference type="InterPro" id="IPR008445">
    <property type="entry name" value="A15"/>
</dbReference>
<dbReference type="Pfam" id="PF05846">
    <property type="entry name" value="Chordopox_A15"/>
    <property type="match status" value="1"/>
</dbReference>
<organismHost>
    <name type="scientific">Homo sapiens</name>
    <name type="common">Human</name>
    <dbReference type="NCBI Taxonomy" id="9606"/>
</organismHost>
<name>PG142_VAR67</name>
<proteinExistence type="inferred from homology"/>
<sequence length="94" mass="10951">MFVDDDSLIIYSTWPSTLSDSSGRVIVMPDNRSFTFKEGFKLDESIKSILLVNPSSIDLLKIRVYKHRIKWMGNIFVLFEQENIPPPFRLVNDK</sequence>
<protein>
    <recommendedName>
        <fullName>Core protein OPG142</fullName>
    </recommendedName>
</protein>
<organism>
    <name type="scientific">Variola virus (isolate Human/India/Ind3/1967)</name>
    <name type="common">VARV</name>
    <name type="synonym">Smallpox virus</name>
    <dbReference type="NCBI Taxonomy" id="587200"/>
    <lineage>
        <taxon>Viruses</taxon>
        <taxon>Varidnaviria</taxon>
        <taxon>Bamfordvirae</taxon>
        <taxon>Nucleocytoviricota</taxon>
        <taxon>Pokkesviricetes</taxon>
        <taxon>Chitovirales</taxon>
        <taxon>Poxviridae</taxon>
        <taxon>Chordopoxvirinae</taxon>
        <taxon>Orthopoxvirus</taxon>
        <taxon>Variola virus</taxon>
    </lineage>
</organism>
<evidence type="ECO:0000250" key="1">
    <source>
        <dbReference type="UniProtKB" id="P68718"/>
    </source>
</evidence>
<evidence type="ECO:0000305" key="2"/>
<comment type="function">
    <text evidence="1">Late protein which is a part of a large complex required for early virion morphogenesis. This complex participates in the formation of virosomes and the incorporation of virosomal contents into nascent immature virions. Required for the stability and kinase activity of OPG054.</text>
</comment>
<comment type="subunit">
    <text evidence="1">Part of a complex composed of the kinase OPG054, OPG092, OPG100, OPG114, OPG115, OPG142 and OPG157.</text>
</comment>
<comment type="subcellular location">
    <subcellularLocation>
        <location evidence="1">Host cytoplasm</location>
    </subcellularLocation>
    <subcellularLocation>
        <location evidence="1">Virion</location>
    </subcellularLocation>
    <text evidence="1">Localizes in cytoplasmic virus factories and present in the virion core.</text>
</comment>
<comment type="similarity">
    <text evidence="2">Belongs to the orthopoxvirus OPG142 family.</text>
</comment>
<gene>
    <name type="primary">OPG142</name>
    <name type="ORF">A15L</name>
    <name type="ORF">A16L</name>
</gene>
<keyword id="KW-0067">ATP-binding</keyword>
<keyword id="KW-0238">DNA-binding</keyword>
<keyword id="KW-0347">Helicase</keyword>
<keyword id="KW-1035">Host cytoplasm</keyword>
<keyword id="KW-0378">Hydrolase</keyword>
<keyword id="KW-0426">Late protein</keyword>
<keyword id="KW-0547">Nucleotide-binding</keyword>
<keyword id="KW-0597">Phosphoprotein</keyword>
<keyword id="KW-1185">Reference proteome</keyword>
<keyword id="KW-0804">Transcription</keyword>
<keyword id="KW-0805">Transcription regulation</keyword>
<keyword id="KW-0806">Transcription termination</keyword>
<keyword id="KW-0946">Virion</keyword>
<reference key="1">
    <citation type="journal article" date="1993" name="FEBS Lett.">
        <title>Genes of variola and vaccinia viruses necessary to overcome the host protective mechanisms.</title>
        <authorList>
            <person name="Shchelkunov S.N."/>
            <person name="Blinov V.M."/>
            <person name="Sandakhchiev L.S."/>
        </authorList>
    </citation>
    <scope>NUCLEOTIDE SEQUENCE [GENOMIC DNA]</scope>
</reference>
<feature type="chain" id="PRO_0000099248" description="Core protein OPG142">
    <location>
        <begin position="1"/>
        <end position="94"/>
    </location>
</feature>
<accession>P0DOO7</accession>
<accession>P33840</accession>